<evidence type="ECO:0000255" key="1">
    <source>
        <dbReference type="HAMAP-Rule" id="MF_04062"/>
    </source>
</evidence>
<dbReference type="EMBL" id="CY015088">
    <property type="protein sequence ID" value="ABI85116.1"/>
    <property type="molecule type" value="Genomic_RNA"/>
</dbReference>
<dbReference type="SMR" id="Q0A2G6"/>
<dbReference type="PRO" id="PR:Q0A2G6"/>
<dbReference type="Proteomes" id="UP000169634">
    <property type="component" value="Genome"/>
</dbReference>
<dbReference type="GO" id="GO:0042025">
    <property type="term" value="C:host cell nucleus"/>
    <property type="evidence" value="ECO:0007669"/>
    <property type="project" value="UniProtKB-SubCell"/>
</dbReference>
<dbReference type="GO" id="GO:0044423">
    <property type="term" value="C:virion component"/>
    <property type="evidence" value="ECO:0007669"/>
    <property type="project" value="UniProtKB-UniRule"/>
</dbReference>
<dbReference type="GO" id="GO:0003723">
    <property type="term" value="F:RNA binding"/>
    <property type="evidence" value="ECO:0007669"/>
    <property type="project" value="UniProtKB-UniRule"/>
</dbReference>
<dbReference type="GO" id="GO:0003968">
    <property type="term" value="F:RNA-directed RNA polymerase activity"/>
    <property type="evidence" value="ECO:0007669"/>
    <property type="project" value="UniProtKB-UniRule"/>
</dbReference>
<dbReference type="GO" id="GO:0006370">
    <property type="term" value="P:7-methylguanosine mRNA capping"/>
    <property type="evidence" value="ECO:0007669"/>
    <property type="project" value="UniProtKB-UniRule"/>
</dbReference>
<dbReference type="GO" id="GO:0075526">
    <property type="term" value="P:cap snatching"/>
    <property type="evidence" value="ECO:0007669"/>
    <property type="project" value="UniProtKB-UniRule"/>
</dbReference>
<dbReference type="GO" id="GO:0006351">
    <property type="term" value="P:DNA-templated transcription"/>
    <property type="evidence" value="ECO:0007669"/>
    <property type="project" value="UniProtKB-UniRule"/>
</dbReference>
<dbReference type="GO" id="GO:0039657">
    <property type="term" value="P:symbiont-mediated suppression of host gene expression"/>
    <property type="evidence" value="ECO:0007669"/>
    <property type="project" value="UniProtKB-KW"/>
</dbReference>
<dbReference type="GO" id="GO:0039523">
    <property type="term" value="P:symbiont-mediated suppression of host mRNA transcription via inhibition of RNA polymerase II activity"/>
    <property type="evidence" value="ECO:0007669"/>
    <property type="project" value="UniProtKB-UniRule"/>
</dbReference>
<dbReference type="GO" id="GO:0039694">
    <property type="term" value="P:viral RNA genome replication"/>
    <property type="evidence" value="ECO:0007669"/>
    <property type="project" value="InterPro"/>
</dbReference>
<dbReference type="FunFam" id="3.30.30.90:FF:000001">
    <property type="entry name" value="Polymerase basic protein 2"/>
    <property type="match status" value="1"/>
</dbReference>
<dbReference type="Gene3D" id="3.30.30.90">
    <property type="entry name" value="Polymerase Basic Protein 2, C-terminal domain"/>
    <property type="match status" value="1"/>
</dbReference>
<dbReference type="HAMAP" id="MF_04062">
    <property type="entry name" value="INV_PB2"/>
    <property type="match status" value="1"/>
</dbReference>
<dbReference type="InterPro" id="IPR049110">
    <property type="entry name" value="Flu_PB2_2nd"/>
</dbReference>
<dbReference type="InterPro" id="IPR049114">
    <property type="entry name" value="Flu_PB2_6th"/>
</dbReference>
<dbReference type="InterPro" id="IPR049115">
    <property type="entry name" value="Flu_PB2_C"/>
</dbReference>
<dbReference type="InterPro" id="IPR048298">
    <property type="entry name" value="Flu_PB2_CAP-bd"/>
</dbReference>
<dbReference type="InterPro" id="IPR049111">
    <property type="entry name" value="Flu_PB2_middle"/>
</dbReference>
<dbReference type="InterPro" id="IPR049106">
    <property type="entry name" value="Flu_PB2_N"/>
</dbReference>
<dbReference type="InterPro" id="IPR001591">
    <property type="entry name" value="INV_PB2"/>
</dbReference>
<dbReference type="InterPro" id="IPR049113">
    <property type="entry name" value="PB2_helical"/>
</dbReference>
<dbReference type="InterPro" id="IPR037258">
    <property type="entry name" value="PDB2_C"/>
</dbReference>
<dbReference type="Pfam" id="PF20947">
    <property type="entry name" value="Flu_PB2_1st"/>
    <property type="match status" value="1"/>
</dbReference>
<dbReference type="Pfam" id="PF20948">
    <property type="entry name" value="Flu_PB2_2nd"/>
    <property type="match status" value="1"/>
</dbReference>
<dbReference type="Pfam" id="PF20949">
    <property type="entry name" value="Flu_PB2_3rd"/>
    <property type="match status" value="1"/>
</dbReference>
<dbReference type="Pfam" id="PF20950">
    <property type="entry name" value="Flu_PB2_4th"/>
    <property type="match status" value="1"/>
</dbReference>
<dbReference type="Pfam" id="PF00604">
    <property type="entry name" value="Flu_PB2_5th"/>
    <property type="match status" value="1"/>
</dbReference>
<dbReference type="Pfam" id="PF20951">
    <property type="entry name" value="Flu_PB2_6th"/>
    <property type="match status" value="1"/>
</dbReference>
<dbReference type="Pfam" id="PF20952">
    <property type="entry name" value="Flu_PB2_7th"/>
    <property type="match status" value="1"/>
</dbReference>
<dbReference type="SUPFAM" id="SSF160453">
    <property type="entry name" value="PB2 C-terminal domain-like"/>
    <property type="match status" value="1"/>
</dbReference>
<name>PB2_I59A0</name>
<comment type="function">
    <text evidence="1">Plays an essential role in transcription initiation and cap-stealing mechanism, in which cellular capped pre-mRNAs are used to generate primers for viral transcription. Recognizes and binds the 7-methylguanosine-containing cap of the target pre-RNA which is subsequently cleaved after 10-13 nucleotides by the viral protein PA. Plays a role in the initiation of the viral genome replication and modulates the activity of the ribonucleoprotein (RNP) complex.</text>
</comment>
<comment type="subunit">
    <text evidence="1">Influenza RNA polymerase is composed of three subunits: PB1, PB2 and PA. Interacts (via N-terminus) with PB1 (via C-terminus). Interacts with nucleoprotein NP (via N-terminus).</text>
</comment>
<comment type="subcellular location">
    <subcellularLocation>
        <location evidence="1">Virion</location>
    </subcellularLocation>
    <subcellularLocation>
        <location evidence="1">Host nucleus</location>
    </subcellularLocation>
</comment>
<comment type="similarity">
    <text evidence="1">Belongs to the influenza viruses PB2 family.</text>
</comment>
<organismHost>
    <name type="scientific">Aves</name>
    <dbReference type="NCBI Taxonomy" id="8782"/>
</organismHost>
<organismHost>
    <name type="scientific">Felis catus</name>
    <name type="common">Cat</name>
    <name type="synonym">Felis silvestris catus</name>
    <dbReference type="NCBI Taxonomy" id="9685"/>
</organismHost>
<organismHost>
    <name type="scientific">Homo sapiens</name>
    <name type="common">Human</name>
    <dbReference type="NCBI Taxonomy" id="9606"/>
</organismHost>
<organismHost>
    <name type="scientific">Panthera pardus</name>
    <name type="common">Leopard</name>
    <name type="synonym">Felis pardus</name>
    <dbReference type="NCBI Taxonomy" id="9691"/>
</organismHost>
<organismHost>
    <name type="scientific">Panthera tigris</name>
    <name type="common">Tiger</name>
    <dbReference type="NCBI Taxonomy" id="9694"/>
</organismHost>
<organismHost>
    <name type="scientific">Sus scrofa</name>
    <name type="common">Pig</name>
    <dbReference type="NCBI Taxonomy" id="9823"/>
</organismHost>
<protein>
    <recommendedName>
        <fullName evidence="1">Polymerase basic protein 2</fullName>
    </recommendedName>
    <alternativeName>
        <fullName evidence="1">RNA-directed RNA polymerase subunit P3</fullName>
    </alternativeName>
</protein>
<keyword id="KW-1157">Cap snatching</keyword>
<keyword id="KW-1262">Eukaryotic host gene expression shutoff by virus</keyword>
<keyword id="KW-1191">Eukaryotic host transcription shutoff by virus</keyword>
<keyword id="KW-1190">Host gene expression shutoff by virus</keyword>
<keyword id="KW-1048">Host nucleus</keyword>
<keyword id="KW-0945">Host-virus interaction</keyword>
<keyword id="KW-1104">Inhibition of host RNA polymerase II by virus</keyword>
<keyword id="KW-0506">mRNA capping</keyword>
<keyword id="KW-0507">mRNA processing</keyword>
<keyword id="KW-1195">Viral transcription</keyword>
<keyword id="KW-0946">Virion</keyword>
<proteinExistence type="inferred from homology"/>
<reference key="1">
    <citation type="journal article" date="2006" name="Science">
        <title>Large-scale sequence analysis of avian influenza isolates.</title>
        <authorList>
            <person name="Obenauer J.C."/>
            <person name="Denson J."/>
            <person name="Mehta P.K."/>
            <person name="Su X."/>
            <person name="Mukatira S."/>
            <person name="Finkelstein D.B."/>
            <person name="Xu X."/>
            <person name="Wang J."/>
            <person name="Ma J."/>
            <person name="Fan Y."/>
            <person name="Rakestraw K.M."/>
            <person name="Webster R.G."/>
            <person name="Hoffmann E."/>
            <person name="Krauss S."/>
            <person name="Zheng J."/>
            <person name="Zhang Z."/>
            <person name="Naeve C.W."/>
        </authorList>
    </citation>
    <scope>NUCLEOTIDE SEQUENCE [GENOMIC RNA]</scope>
</reference>
<accession>Q0A2G6</accession>
<gene>
    <name evidence="1" type="primary">PB2</name>
</gene>
<sequence length="759" mass="85860">MERIKELRDLMSQSRTREILTKTTVDHMAIIKKYTSGRQEKNPALRMKWMMAMKYPITADKRIMEMIPERNEQGQALWSKTNDAGSDRVMVSPLAVTWWNRNGPTTSTVHYPKVYKTYFEKVERLKHGTFGPVHFRNQVKIRRRVDINPGHADLSAKEAQDVIMEVVFPNEVGARILTSESQLTITKEKKEELQDCKIAPLMVAYILERELVRKTRFLPVAGGTSSVYIEVLHLTQGTCWEQMYTPGGEVRNDDVDQSLIIAARNIVRRATVSADPLASLLEMCHSTQIGGIRMVDILRQNPTEEQAVDICKAAMGLRISSSFSFGGFTFKRTSGSSVKREEEVLTGNLQTLKIRVHEGYEEFTMVGRRATAILRKATRRLIQLIVSGRDEQSIAEAIIVAMVFSQEDCMIKAVRGDLNFVNRANQRLNPMHQLLRHFQKDAKVLFQNWGIEPIDNVMGMIGILPDMTPSTEMSLRGVRVSKMGVDEYSSTERVVVSIDRFLRVRDQRGNVLLSPEEVSETQGTEKLTITYSSSMMWEINGPESVLVNTYQWIIRNWEAVKIQWSQDPTMLYNKMEFEPFQSLVPKATRGQYSGFVRTLFQQMRDVLGTFDTVQIIKLLPFAAAPPEQSRMQFSSLTVNVRGSGMRILVRGNSPVFNYNKATKRLTVLGKDAGALTEDPDEGTAGVESAVLRGFLILGKEDKRYGPALSINELSNLAKGEKANVLIGQGDVVLVMKRKRDSSILTDSQTATKRIRMAIN</sequence>
<feature type="chain" id="PRO_0000309854" description="Polymerase basic protein 2">
    <location>
        <begin position="1"/>
        <end position="759"/>
    </location>
</feature>
<feature type="short sequence motif" description="Nuclear localization signal" evidence="1">
    <location>
        <begin position="736"/>
        <end position="739"/>
    </location>
</feature>
<feature type="site" description="Avian adaptation" evidence="1">
    <location>
        <position position="627"/>
    </location>
</feature>
<organism>
    <name type="scientific">Influenza A virus (strain A/Chicken/Scotland/1959 H5N1)</name>
    <dbReference type="NCBI Taxonomy" id="402527"/>
    <lineage>
        <taxon>Viruses</taxon>
        <taxon>Riboviria</taxon>
        <taxon>Orthornavirae</taxon>
        <taxon>Negarnaviricota</taxon>
        <taxon>Polyploviricotina</taxon>
        <taxon>Insthoviricetes</taxon>
        <taxon>Articulavirales</taxon>
        <taxon>Orthomyxoviridae</taxon>
        <taxon>Alphainfluenzavirus</taxon>
        <taxon>Alphainfluenzavirus influenzae</taxon>
        <taxon>Influenza A virus</taxon>
    </lineage>
</organism>